<feature type="chain" id="PRO_0000247151" description="High affinity cysteine transporter">
    <location>
        <begin position="1"/>
        <end position="531"/>
    </location>
</feature>
<feature type="topological domain" description="Cytoplasmic" evidence="1">
    <location>
        <begin position="1"/>
        <end position="54"/>
    </location>
</feature>
<feature type="transmembrane region" description="Helical" evidence="1">
    <location>
        <begin position="55"/>
        <end position="75"/>
    </location>
</feature>
<feature type="topological domain" description="Lumenal" evidence="1">
    <location>
        <begin position="76"/>
        <end position="97"/>
    </location>
</feature>
<feature type="transmembrane region" description="Helical" evidence="1">
    <location>
        <begin position="98"/>
        <end position="118"/>
    </location>
</feature>
<feature type="topological domain" description="Cytoplasmic" evidence="1">
    <location>
        <begin position="119"/>
        <end position="120"/>
    </location>
</feature>
<feature type="transmembrane region" description="Helical" evidence="1">
    <location>
        <begin position="121"/>
        <end position="141"/>
    </location>
</feature>
<feature type="topological domain" description="Lumenal" evidence="1">
    <location>
        <begin position="142"/>
        <end position="154"/>
    </location>
</feature>
<feature type="transmembrane region" description="Helical" evidence="1">
    <location>
        <begin position="155"/>
        <end position="175"/>
    </location>
</feature>
<feature type="topological domain" description="Cytoplasmic" evidence="1">
    <location>
        <begin position="176"/>
        <end position="186"/>
    </location>
</feature>
<feature type="transmembrane region" description="Helical" evidence="1">
    <location>
        <begin position="187"/>
        <end position="207"/>
    </location>
</feature>
<feature type="topological domain" description="Lumenal" evidence="1">
    <location>
        <begin position="208"/>
        <end position="218"/>
    </location>
</feature>
<feature type="transmembrane region" description="Helical" evidence="1">
    <location>
        <begin position="219"/>
        <end position="239"/>
    </location>
</feature>
<feature type="topological domain" description="Cytoplasmic" evidence="1">
    <location>
        <begin position="240"/>
        <end position="285"/>
    </location>
</feature>
<feature type="transmembrane region" description="Helical" evidence="1">
    <location>
        <begin position="286"/>
        <end position="306"/>
    </location>
</feature>
<feature type="topological domain" description="Lumenal" evidence="1">
    <location>
        <begin position="307"/>
        <end position="324"/>
    </location>
</feature>
<feature type="transmembrane region" description="Helical" evidence="1">
    <location>
        <begin position="325"/>
        <end position="345"/>
    </location>
</feature>
<feature type="topological domain" description="Cytoplasmic" evidence="1">
    <location>
        <begin position="346"/>
        <end position="352"/>
    </location>
</feature>
<feature type="transmembrane region" description="Helical" evidence="1">
    <location>
        <begin position="353"/>
        <end position="373"/>
    </location>
</feature>
<feature type="topological domain" description="Lumenal" evidence="1">
    <location>
        <begin position="374"/>
        <end position="378"/>
    </location>
</feature>
<feature type="transmembrane region" description="Helical" evidence="1">
    <location>
        <begin position="379"/>
        <end position="399"/>
    </location>
</feature>
<feature type="topological domain" description="Cytoplasmic" evidence="1">
    <location>
        <begin position="400"/>
        <end position="413"/>
    </location>
</feature>
<feature type="transmembrane region" description="Helical" evidence="1">
    <location>
        <begin position="414"/>
        <end position="436"/>
    </location>
</feature>
<feature type="topological domain" description="Lumenal" evidence="1">
    <location>
        <begin position="437"/>
        <end position="447"/>
    </location>
</feature>
<feature type="transmembrane region" description="Helical" evidence="1">
    <location>
        <begin position="448"/>
        <end position="468"/>
    </location>
</feature>
<feature type="topological domain" description="Cytoplasmic" evidence="1">
    <location>
        <begin position="469"/>
        <end position="531"/>
    </location>
</feature>
<feature type="coiled-coil region" evidence="1">
    <location>
        <begin position="469"/>
        <end position="498"/>
    </location>
</feature>
<feature type="modified residue" description="Phosphoserine" evidence="7">
    <location>
        <position position="500"/>
    </location>
</feature>
<feature type="modified residue" description="Phosphoserine" evidence="7">
    <location>
        <position position="501"/>
    </location>
</feature>
<feature type="glycosylation site" description="N-linked (GlcNAc...) asparagine" evidence="1">
    <location>
        <position position="146"/>
    </location>
</feature>
<protein>
    <recommendedName>
        <fullName>High affinity cysteine transporter</fullName>
    </recommendedName>
</protein>
<proteinExistence type="evidence at protein level"/>
<comment type="function">
    <text evidence="3">High affinity cysteine-specific transporter. Major contributor to cysteine transport when cysteine, at low concentrations, is provided as the sole sulfur source.</text>
</comment>
<comment type="biophysicochemical properties">
    <kinetics>
        <KM evidence="3">55.4 uM for cysteine</KM>
        <Vmax evidence="3">22.4 nmol/min/mg enzyme for cysteine transport</Vmax>
    </kinetics>
</comment>
<comment type="subcellular location">
    <subcellularLocation>
        <location>Cell membrane</location>
        <topology>Multi-pass membrane protein</topology>
    </subcellularLocation>
    <subcellularLocation>
        <location>Endoplasmic reticulum membrane</location>
        <topology>Multi-pass membrane protein</topology>
    </subcellularLocation>
</comment>
<comment type="induction">
    <text evidence="2 3 4 5">Induced under nitrogen starvation conditions, co-regulated by GCN4 and GLN3. Regulated by the MET4-based sulfur regulatory network. Expression is maximum in nonrepressing sulfur conditions and considerably repressed in the presence of organic sulfur. Induced by chromate.</text>
</comment>
<comment type="similarity">
    <text evidence="6">Belongs to the major facilitator superfamily. Allantoate permease family.</text>
</comment>
<accession>Q12235</accession>
<accession>D6VXV3</accession>
<reference key="1">
    <citation type="journal article" date="1997" name="Nature">
        <title>The nucleotide sequence of Saccharomyces cerevisiae chromosome XII.</title>
        <authorList>
            <person name="Johnston M."/>
            <person name="Hillier L.W."/>
            <person name="Riles L."/>
            <person name="Albermann K."/>
            <person name="Andre B."/>
            <person name="Ansorge W."/>
            <person name="Benes V."/>
            <person name="Brueckner M."/>
            <person name="Delius H."/>
            <person name="Dubois E."/>
            <person name="Duesterhoeft A."/>
            <person name="Entian K.-D."/>
            <person name="Floeth M."/>
            <person name="Goffeau A."/>
            <person name="Hebling U."/>
            <person name="Heumann K."/>
            <person name="Heuss-Neitzel D."/>
            <person name="Hilbert H."/>
            <person name="Hilger F."/>
            <person name="Kleine K."/>
            <person name="Koetter P."/>
            <person name="Louis E.J."/>
            <person name="Messenguy F."/>
            <person name="Mewes H.-W."/>
            <person name="Miosga T."/>
            <person name="Moestl D."/>
            <person name="Mueller-Auer S."/>
            <person name="Nentwich U."/>
            <person name="Obermaier B."/>
            <person name="Piravandi E."/>
            <person name="Pohl T.M."/>
            <person name="Portetelle D."/>
            <person name="Purnelle B."/>
            <person name="Rechmann S."/>
            <person name="Rieger M."/>
            <person name="Rinke M."/>
            <person name="Rose M."/>
            <person name="Scharfe M."/>
            <person name="Scherens B."/>
            <person name="Scholler P."/>
            <person name="Schwager C."/>
            <person name="Schwarz S."/>
            <person name="Underwood A.P."/>
            <person name="Urrestarazu L.A."/>
            <person name="Vandenbol M."/>
            <person name="Verhasselt P."/>
            <person name="Vierendeels F."/>
            <person name="Voet M."/>
            <person name="Volckaert G."/>
            <person name="Voss H."/>
            <person name="Wambutt R."/>
            <person name="Wedler E."/>
            <person name="Wedler H."/>
            <person name="Zimmermann F.K."/>
            <person name="Zollner A."/>
            <person name="Hani J."/>
            <person name="Hoheisel J.D."/>
        </authorList>
    </citation>
    <scope>NUCLEOTIDE SEQUENCE [LARGE SCALE GENOMIC DNA]</scope>
    <source>
        <strain>ATCC 204508 / S288c</strain>
    </source>
</reference>
<reference key="2">
    <citation type="journal article" date="2014" name="G3 (Bethesda)">
        <title>The reference genome sequence of Saccharomyces cerevisiae: Then and now.</title>
        <authorList>
            <person name="Engel S.R."/>
            <person name="Dietrich F.S."/>
            <person name="Fisk D.G."/>
            <person name="Binkley G."/>
            <person name="Balakrishnan R."/>
            <person name="Costanzo M.C."/>
            <person name="Dwight S.S."/>
            <person name="Hitz B.C."/>
            <person name="Karra K."/>
            <person name="Nash R.S."/>
            <person name="Weng S."/>
            <person name="Wong E.D."/>
            <person name="Lloyd P."/>
            <person name="Skrzypek M.S."/>
            <person name="Miyasato S.R."/>
            <person name="Simison M."/>
            <person name="Cherry J.M."/>
        </authorList>
    </citation>
    <scope>GENOME REANNOTATION</scope>
    <source>
        <strain>ATCC 204508 / S288c</strain>
    </source>
</reference>
<reference key="3">
    <citation type="journal article" date="2007" name="Genome Res.">
        <title>Approaching a complete repository of sequence-verified protein-encoding clones for Saccharomyces cerevisiae.</title>
        <authorList>
            <person name="Hu Y."/>
            <person name="Rolfs A."/>
            <person name="Bhullar B."/>
            <person name="Murthy T.V.S."/>
            <person name="Zhu C."/>
            <person name="Berger M.F."/>
            <person name="Camargo A.A."/>
            <person name="Kelley F."/>
            <person name="McCarron S."/>
            <person name="Jepson D."/>
            <person name="Richardson A."/>
            <person name="Raphael J."/>
            <person name="Moreira D."/>
            <person name="Taycher E."/>
            <person name="Zuo D."/>
            <person name="Mohr S."/>
            <person name="Kane M.F."/>
            <person name="Williamson J."/>
            <person name="Simpson A.J.G."/>
            <person name="Bulyk M.L."/>
            <person name="Harlow E."/>
            <person name="Marsischky G."/>
            <person name="Kolodner R.D."/>
            <person name="LaBaer J."/>
        </authorList>
    </citation>
    <scope>NUCLEOTIDE SEQUENCE [GENOMIC DNA]</scope>
    <source>
        <strain>ATCC 204508 / S288c</strain>
    </source>
</reference>
<reference key="4">
    <citation type="journal article" date="2000" name="Yeast">
        <title>Functional analysis of eight open reading frames on chromosomes XII and XIV of Saccharomyces cerevisiae.</title>
        <authorList>
            <person name="Ahmed Khan S."/>
            <person name="Zhang N."/>
            <person name="Ismail T."/>
            <person name="El-Moghazy A.-N."/>
            <person name="Butt A."/>
            <person name="Wu J."/>
            <person name="Merlotti C."/>
            <person name="Hayes A."/>
            <person name="Gardner D.C.J."/>
            <person name="Oliver S.G."/>
        </authorList>
    </citation>
    <scope>INDUCTION</scope>
</reference>
<reference key="5">
    <citation type="journal article" date="2003" name="Nature">
        <title>Global analysis of protein localization in budding yeast.</title>
        <authorList>
            <person name="Huh W.-K."/>
            <person name="Falvo J.V."/>
            <person name="Gerke L.C."/>
            <person name="Carroll A.S."/>
            <person name="Howson R.W."/>
            <person name="Weissman J.S."/>
            <person name="O'Shea E.K."/>
        </authorList>
    </citation>
    <scope>SUBCELLULAR LOCATION [LARGE SCALE ANALYSIS]</scope>
</reference>
<reference key="6">
    <citation type="journal article" date="2006" name="Proc. Natl. Acad. Sci. U.S.A.">
        <title>A global topology map of the Saccharomyces cerevisiae membrane proteome.</title>
        <authorList>
            <person name="Kim H."/>
            <person name="Melen K."/>
            <person name="Oesterberg M."/>
            <person name="von Heijne G."/>
        </authorList>
    </citation>
    <scope>TOPOLOGY [LARGE SCALE ANALYSIS]</scope>
    <source>
        <strain>ATCC 208353 / W303-1A</strain>
    </source>
</reference>
<reference key="7">
    <citation type="journal article" date="2007" name="Genetics">
        <title>Yct1p, a novel, high-affinity, cysteine-specific transporter from the yeast Saccharomyces cerevisiae.</title>
        <authorList>
            <person name="Kaur J."/>
            <person name="Bachhawat A.K."/>
        </authorList>
    </citation>
    <scope>FUNCTION</scope>
    <scope>BIOPHYSICOCHEMICAL PROPERTIES</scope>
    <scope>SUBCELLULAR LOCATION</scope>
    <scope>INDUCTION</scope>
</reference>
<reference key="8">
    <citation type="journal article" date="2008" name="Mol. Cell. Proteomics">
        <title>A multidimensional chromatography technology for in-depth phosphoproteome analysis.</title>
        <authorList>
            <person name="Albuquerque C.P."/>
            <person name="Smolka M.B."/>
            <person name="Payne S.H."/>
            <person name="Bafna V."/>
            <person name="Eng J."/>
            <person name="Zhou H."/>
        </authorList>
    </citation>
    <scope>IDENTIFICATION BY MASS SPECTROMETRY [LARGE SCALE ANALYSIS]</scope>
</reference>
<reference key="9">
    <citation type="journal article" date="2008" name="Toxicol. Sci.">
        <title>Chromate causes sulfur starvation in yeast.</title>
        <authorList>
            <person name="Pereira Y."/>
            <person name="Lagniel G."/>
            <person name="Godat E."/>
            <person name="Baudouin-Cornu P."/>
            <person name="Junot C."/>
            <person name="Labarre J."/>
        </authorList>
    </citation>
    <scope>INDUCTION</scope>
</reference>
<reference key="10">
    <citation type="journal article" date="2009" name="Science">
        <title>Global analysis of Cdk1 substrate phosphorylation sites provides insights into evolution.</title>
        <authorList>
            <person name="Holt L.J."/>
            <person name="Tuch B.B."/>
            <person name="Villen J."/>
            <person name="Johnson A.D."/>
            <person name="Gygi S.P."/>
            <person name="Morgan D.O."/>
        </authorList>
    </citation>
    <scope>PHOSPHORYLATION [LARGE SCALE ANALYSIS] AT SER-500 AND SER-501</scope>
    <scope>IDENTIFICATION BY MASS SPECTROMETRY [LARGE SCALE ANALYSIS]</scope>
</reference>
<reference key="11">
    <citation type="journal article" date="2010" name="J. Biol. Chem.">
        <title>Integration of general amino acid control and target of rapamycin (TOR) regulatory pathways in nitrogen assimilation in yeast.</title>
        <authorList>
            <person name="Staschke K.A."/>
            <person name="Dey S."/>
            <person name="Zaborske J.M."/>
            <person name="Palam L.R."/>
            <person name="McClintick J.N."/>
            <person name="Pan T."/>
            <person name="Edenberg H.J."/>
            <person name="Wek R.C."/>
        </authorList>
    </citation>
    <scope>INDUCTION</scope>
</reference>
<organism>
    <name type="scientific">Saccharomyces cerevisiae (strain ATCC 204508 / S288c)</name>
    <name type="common">Baker's yeast</name>
    <dbReference type="NCBI Taxonomy" id="559292"/>
    <lineage>
        <taxon>Eukaryota</taxon>
        <taxon>Fungi</taxon>
        <taxon>Dikarya</taxon>
        <taxon>Ascomycota</taxon>
        <taxon>Saccharomycotina</taxon>
        <taxon>Saccharomycetes</taxon>
        <taxon>Saccharomycetales</taxon>
        <taxon>Saccharomycetaceae</taxon>
        <taxon>Saccharomyces</taxon>
    </lineage>
</organism>
<keyword id="KW-0029">Amino-acid transport</keyword>
<keyword id="KW-1003">Cell membrane</keyword>
<keyword id="KW-0175">Coiled coil</keyword>
<keyword id="KW-0256">Endoplasmic reticulum</keyword>
<keyword id="KW-0325">Glycoprotein</keyword>
<keyword id="KW-0472">Membrane</keyword>
<keyword id="KW-0597">Phosphoprotein</keyword>
<keyword id="KW-1185">Reference proteome</keyword>
<keyword id="KW-0812">Transmembrane</keyword>
<keyword id="KW-1133">Transmembrane helix</keyword>
<keyword id="KW-0813">Transport</keyword>
<name>YCT1_YEAST</name>
<gene>
    <name type="primary">YCT1</name>
    <name type="ordered locus">YLL055W</name>
    <name type="ORF">L0578</name>
</gene>
<sequence length="531" mass="58905">MSKVDVKIGADSISSSDEILVPSRLADVTLAFMEENDAAVPEITPEQEKKLKRKLFLTIFTFVSAINLLLYMDKATLSYDSILGFFEDTGLTQNTYNTVNTLFYVGFAIGQFPGQYLAQKLPLGKFLGGLLATWTILIFLSCTAYNFSGVVALRFFLGLTESVVIPILITTMGMFFDASERAAAQPFFFAACMGSPIPTGFIAYGVLHITNPSISLWKIFTIIIGGLTFIMTVVVILWFPNNPADVKFFSIQERVWIIRRVQASTGSSIEQKVFKKSQFREAMKDYITWLFGLFFLLQQLANNLPYQQNLLFEGMGGVDALGSTLVSVAGAGFAVVCAFIATLMLAKWKNISALTAIFWTLPALVGSIAAAALPWDNKIGILANICMAGQIFGIPFIIALSWASSSASGYTKKLTRSSVSLFAMGIANIISPQIWREKDSPRFLPAWIVQIVLSFSLAPAILLLIHFILKRRNNQRLKNYDENLQNYLDRIQLIESENPSSIEEGKVVTHENNLAVFDLTDLENETFIYPL</sequence>
<dbReference type="EMBL" id="Z47973">
    <property type="protein sequence ID" value="CAA88002.1"/>
    <property type="molecule type" value="Genomic_DNA"/>
</dbReference>
<dbReference type="EMBL" id="Z73160">
    <property type="protein sequence ID" value="CAA97508.1"/>
    <property type="molecule type" value="Genomic_DNA"/>
</dbReference>
<dbReference type="EMBL" id="AY692634">
    <property type="protein sequence ID" value="AAT92653.1"/>
    <property type="molecule type" value="Genomic_DNA"/>
</dbReference>
<dbReference type="EMBL" id="BK006945">
    <property type="protein sequence ID" value="DAA09269.1"/>
    <property type="molecule type" value="Genomic_DNA"/>
</dbReference>
<dbReference type="PIR" id="S50965">
    <property type="entry name" value="S50965"/>
</dbReference>
<dbReference type="RefSeq" id="NP_013045.1">
    <property type="nucleotide sequence ID" value="NM_001181875.1"/>
</dbReference>
<dbReference type="SMR" id="Q12235"/>
<dbReference type="BioGRID" id="31260">
    <property type="interactions" value="52"/>
</dbReference>
<dbReference type="FunCoup" id="Q12235">
    <property type="interactions" value="63"/>
</dbReference>
<dbReference type="MINT" id="Q12235"/>
<dbReference type="STRING" id="4932.YLL055W"/>
<dbReference type="TCDB" id="2.A.1.14.20">
    <property type="family name" value="the major facilitator superfamily (mfs)"/>
</dbReference>
<dbReference type="GlyCosmos" id="Q12235">
    <property type="glycosylation" value="1 site, No reported glycans"/>
</dbReference>
<dbReference type="GlyGen" id="Q12235">
    <property type="glycosylation" value="1 site"/>
</dbReference>
<dbReference type="iPTMnet" id="Q12235"/>
<dbReference type="PaxDb" id="4932-YLL055W"/>
<dbReference type="PeptideAtlas" id="Q12235"/>
<dbReference type="EnsemblFungi" id="YLL055W_mRNA">
    <property type="protein sequence ID" value="YLL055W"/>
    <property type="gene ID" value="YLL055W"/>
</dbReference>
<dbReference type="GeneID" id="850671"/>
<dbReference type="KEGG" id="sce:YLL055W"/>
<dbReference type="AGR" id="SGD:S000003978"/>
<dbReference type="SGD" id="S000003978">
    <property type="gene designation" value="YCT1"/>
</dbReference>
<dbReference type="VEuPathDB" id="FungiDB:YLL055W"/>
<dbReference type="eggNOG" id="KOG2533">
    <property type="taxonomic scope" value="Eukaryota"/>
</dbReference>
<dbReference type="HOGENOM" id="CLU_001265_0_5_1"/>
<dbReference type="InParanoid" id="Q12235"/>
<dbReference type="OMA" id="HCTAYNY"/>
<dbReference type="OrthoDB" id="3639251at2759"/>
<dbReference type="BioCyc" id="YEAST:G3O-32154-MONOMER"/>
<dbReference type="SABIO-RK" id="Q12235"/>
<dbReference type="BioGRID-ORCS" id="850671">
    <property type="hits" value="1 hit in 10 CRISPR screens"/>
</dbReference>
<dbReference type="PRO" id="PR:Q12235"/>
<dbReference type="Proteomes" id="UP000002311">
    <property type="component" value="Chromosome XII"/>
</dbReference>
<dbReference type="RNAct" id="Q12235">
    <property type="molecule type" value="protein"/>
</dbReference>
<dbReference type="GO" id="GO:0071944">
    <property type="term" value="C:cell periphery"/>
    <property type="evidence" value="ECO:0007005"/>
    <property type="project" value="SGD"/>
</dbReference>
<dbReference type="GO" id="GO:0005783">
    <property type="term" value="C:endoplasmic reticulum"/>
    <property type="evidence" value="ECO:0007005"/>
    <property type="project" value="SGD"/>
</dbReference>
<dbReference type="GO" id="GO:0005789">
    <property type="term" value="C:endoplasmic reticulum membrane"/>
    <property type="evidence" value="ECO:0007669"/>
    <property type="project" value="UniProtKB-SubCell"/>
</dbReference>
<dbReference type="GO" id="GO:0016020">
    <property type="term" value="C:membrane"/>
    <property type="evidence" value="ECO:0000318"/>
    <property type="project" value="GO_Central"/>
</dbReference>
<dbReference type="GO" id="GO:0005886">
    <property type="term" value="C:plasma membrane"/>
    <property type="evidence" value="ECO:0007669"/>
    <property type="project" value="UniProtKB-SubCell"/>
</dbReference>
<dbReference type="GO" id="GO:0033229">
    <property type="term" value="F:cysteine transmembrane transporter activity"/>
    <property type="evidence" value="ECO:0000314"/>
    <property type="project" value="SGD"/>
</dbReference>
<dbReference type="GO" id="GO:0042883">
    <property type="term" value="P:cysteine transport"/>
    <property type="evidence" value="ECO:0000314"/>
    <property type="project" value="SGD"/>
</dbReference>
<dbReference type="CDD" id="cd17327">
    <property type="entry name" value="MFS_FEN2_like"/>
    <property type="match status" value="1"/>
</dbReference>
<dbReference type="FunFam" id="1.20.1250.20:FF:000476">
    <property type="entry name" value="Cysteine transporter"/>
    <property type="match status" value="1"/>
</dbReference>
<dbReference type="Gene3D" id="1.20.1250.20">
    <property type="entry name" value="MFS general substrate transporter like domains"/>
    <property type="match status" value="1"/>
</dbReference>
<dbReference type="InterPro" id="IPR011701">
    <property type="entry name" value="MFS"/>
</dbReference>
<dbReference type="InterPro" id="IPR036259">
    <property type="entry name" value="MFS_trans_sf"/>
</dbReference>
<dbReference type="PANTHER" id="PTHR43791:SF63">
    <property type="entry name" value="HIGH AFFINITY CYSTEINE TRANSPORTER"/>
    <property type="match status" value="1"/>
</dbReference>
<dbReference type="PANTHER" id="PTHR43791">
    <property type="entry name" value="PERMEASE-RELATED"/>
    <property type="match status" value="1"/>
</dbReference>
<dbReference type="Pfam" id="PF07690">
    <property type="entry name" value="MFS_1"/>
    <property type="match status" value="1"/>
</dbReference>
<dbReference type="SUPFAM" id="SSF103473">
    <property type="entry name" value="MFS general substrate transporter"/>
    <property type="match status" value="1"/>
</dbReference>
<evidence type="ECO:0000255" key="1"/>
<evidence type="ECO:0000269" key="2">
    <source>
    </source>
</evidence>
<evidence type="ECO:0000269" key="3">
    <source>
    </source>
</evidence>
<evidence type="ECO:0000269" key="4">
    <source>
    </source>
</evidence>
<evidence type="ECO:0000269" key="5">
    <source>
    </source>
</evidence>
<evidence type="ECO:0000305" key="6"/>
<evidence type="ECO:0007744" key="7">
    <source>
    </source>
</evidence>